<reference key="1">
    <citation type="submission" date="2008-05" db="EMBL/GenBank/DDBJ databases">
        <title>Complete sequence of Shigella boydii serotype 18 strain BS512.</title>
        <authorList>
            <person name="Rasko D.A."/>
            <person name="Rosovitz M."/>
            <person name="Maurelli A.T."/>
            <person name="Myers G."/>
            <person name="Seshadri R."/>
            <person name="Cer R."/>
            <person name="Jiang L."/>
            <person name="Ravel J."/>
            <person name="Sebastian Y."/>
        </authorList>
    </citation>
    <scope>NUCLEOTIDE SEQUENCE [LARGE SCALE GENOMIC DNA]</scope>
    <source>
        <strain>CDC 3083-94 / BS512</strain>
    </source>
</reference>
<accession>B2TTU1</accession>
<sequence length="172" mass="18969">MVDKRESYTKEDLLASGRGELFGAKGPQLPAPNMLMMDRVVKMTETGGNFDKGYVEAELDINPDLWFFGCHFIGDPVMPGCLGLDAMWQLVGFYLGWLGGEGKGRALGVGEVKFTGQVLPTAKKVTYRIHFKRIVNRRLIMGLADGEVLVDGRLIYTASDLKVGLFQDTSAF</sequence>
<dbReference type="EC" id="4.2.1.59" evidence="1"/>
<dbReference type="EC" id="5.3.3.14" evidence="1"/>
<dbReference type="EMBL" id="CP001063">
    <property type="protein sequence ID" value="ACD06545.1"/>
    <property type="molecule type" value="Genomic_DNA"/>
</dbReference>
<dbReference type="RefSeq" id="WP_000227927.1">
    <property type="nucleotide sequence ID" value="NC_010658.1"/>
</dbReference>
<dbReference type="SMR" id="B2TTU1"/>
<dbReference type="STRING" id="344609.SbBS512_E2362"/>
<dbReference type="GeneID" id="93776460"/>
<dbReference type="KEGG" id="sbc:SbBS512_E2362"/>
<dbReference type="HOGENOM" id="CLU_097925_0_0_6"/>
<dbReference type="UniPathway" id="UPA00094"/>
<dbReference type="Proteomes" id="UP000001030">
    <property type="component" value="Chromosome"/>
</dbReference>
<dbReference type="GO" id="GO:0005737">
    <property type="term" value="C:cytoplasm"/>
    <property type="evidence" value="ECO:0007669"/>
    <property type="project" value="UniProtKB-SubCell"/>
</dbReference>
<dbReference type="GO" id="GO:0019171">
    <property type="term" value="F:(3R)-hydroxyacyl-[acyl-carrier-protein] dehydratase activity"/>
    <property type="evidence" value="ECO:0007669"/>
    <property type="project" value="UniProtKB-UniRule"/>
</dbReference>
<dbReference type="GO" id="GO:0034017">
    <property type="term" value="F:trans-2-decenoyl-acyl-carrier-protein isomerase activity"/>
    <property type="evidence" value="ECO:0007669"/>
    <property type="project" value="UniProtKB-UniRule"/>
</dbReference>
<dbReference type="GO" id="GO:0006636">
    <property type="term" value="P:unsaturated fatty acid biosynthetic process"/>
    <property type="evidence" value="ECO:0007669"/>
    <property type="project" value="UniProtKB-UniRule"/>
</dbReference>
<dbReference type="CDD" id="cd01287">
    <property type="entry name" value="FabA"/>
    <property type="match status" value="1"/>
</dbReference>
<dbReference type="FunFam" id="3.10.129.10:FF:000003">
    <property type="entry name" value="3-hydroxydecanoyl-[acyl-carrier-protein] dehydratase"/>
    <property type="match status" value="1"/>
</dbReference>
<dbReference type="Gene3D" id="3.10.129.10">
    <property type="entry name" value="Hotdog Thioesterase"/>
    <property type="match status" value="1"/>
</dbReference>
<dbReference type="HAMAP" id="MF_00405">
    <property type="entry name" value="FabA"/>
    <property type="match status" value="1"/>
</dbReference>
<dbReference type="InterPro" id="IPR010083">
    <property type="entry name" value="FabA"/>
</dbReference>
<dbReference type="InterPro" id="IPR013114">
    <property type="entry name" value="FabA_FabZ"/>
</dbReference>
<dbReference type="InterPro" id="IPR029069">
    <property type="entry name" value="HotDog_dom_sf"/>
</dbReference>
<dbReference type="NCBIfam" id="TIGR01749">
    <property type="entry name" value="fabA"/>
    <property type="match status" value="1"/>
</dbReference>
<dbReference type="NCBIfam" id="NF003509">
    <property type="entry name" value="PRK05174.1"/>
    <property type="match status" value="1"/>
</dbReference>
<dbReference type="PANTHER" id="PTHR30272">
    <property type="entry name" value="3-HYDROXYACYL-[ACYL-CARRIER-PROTEIN] DEHYDRATASE"/>
    <property type="match status" value="1"/>
</dbReference>
<dbReference type="PANTHER" id="PTHR30272:SF8">
    <property type="entry name" value="3-HYDROXYDECANOYL-[ACYL-CARRIER-PROTEIN] DEHYDRATASE"/>
    <property type="match status" value="1"/>
</dbReference>
<dbReference type="Pfam" id="PF07977">
    <property type="entry name" value="FabA"/>
    <property type="match status" value="1"/>
</dbReference>
<dbReference type="SUPFAM" id="SSF54637">
    <property type="entry name" value="Thioesterase/thiol ester dehydrase-isomerase"/>
    <property type="match status" value="1"/>
</dbReference>
<gene>
    <name evidence="1" type="primary">fabA</name>
    <name type="ordered locus">SbBS512_E2362</name>
</gene>
<proteinExistence type="inferred from homology"/>
<evidence type="ECO:0000255" key="1">
    <source>
        <dbReference type="HAMAP-Rule" id="MF_00405"/>
    </source>
</evidence>
<comment type="function">
    <text evidence="1">Necessary for the introduction of cis unsaturation into fatty acids. Catalyzes the dehydration of (3R)-3-hydroxydecanoyl-ACP to E-(2)-decenoyl-ACP and then its isomerization to Z-(3)-decenoyl-ACP. Can catalyze the dehydratase reaction for beta-hydroxyacyl-ACPs with saturated chain lengths up to 16:0, being most active on intermediate chain length.</text>
</comment>
<comment type="catalytic activity">
    <reaction evidence="1">
        <text>a (3R)-hydroxyacyl-[ACP] = a (2E)-enoyl-[ACP] + H2O</text>
        <dbReference type="Rhea" id="RHEA:13097"/>
        <dbReference type="Rhea" id="RHEA-COMP:9925"/>
        <dbReference type="Rhea" id="RHEA-COMP:9945"/>
        <dbReference type="ChEBI" id="CHEBI:15377"/>
        <dbReference type="ChEBI" id="CHEBI:78784"/>
        <dbReference type="ChEBI" id="CHEBI:78827"/>
        <dbReference type="EC" id="4.2.1.59"/>
    </reaction>
</comment>
<comment type="catalytic activity">
    <reaction evidence="1">
        <text>(3R)-hydroxydecanoyl-[ACP] = (2E)-decenoyl-[ACP] + H2O</text>
        <dbReference type="Rhea" id="RHEA:41860"/>
        <dbReference type="Rhea" id="RHEA-COMP:9638"/>
        <dbReference type="Rhea" id="RHEA-COMP:9639"/>
        <dbReference type="ChEBI" id="CHEBI:15377"/>
        <dbReference type="ChEBI" id="CHEBI:78466"/>
        <dbReference type="ChEBI" id="CHEBI:78467"/>
    </reaction>
</comment>
<comment type="catalytic activity">
    <reaction evidence="1">
        <text>(2E)-decenoyl-[ACP] = (3Z)-decenoyl-[ACP]</text>
        <dbReference type="Rhea" id="RHEA:23568"/>
        <dbReference type="Rhea" id="RHEA-COMP:9639"/>
        <dbReference type="Rhea" id="RHEA-COMP:9927"/>
        <dbReference type="ChEBI" id="CHEBI:78467"/>
        <dbReference type="ChEBI" id="CHEBI:78798"/>
        <dbReference type="EC" id="5.3.3.14"/>
    </reaction>
</comment>
<comment type="pathway">
    <text evidence="1">Lipid metabolism; fatty acid biosynthesis.</text>
</comment>
<comment type="subunit">
    <text evidence="1">Homodimer.</text>
</comment>
<comment type="subcellular location">
    <subcellularLocation>
        <location evidence="1">Cytoplasm</location>
    </subcellularLocation>
</comment>
<comment type="similarity">
    <text evidence="1">Belongs to the thioester dehydratase family. FabA subfamily.</text>
</comment>
<feature type="chain" id="PRO_1000201221" description="3-hydroxydecanoyl-[acyl-carrier-protein] dehydratase">
    <location>
        <begin position="1"/>
        <end position="172"/>
    </location>
</feature>
<feature type="active site" evidence="1">
    <location>
        <position position="71"/>
    </location>
</feature>
<name>FABA_SHIB3</name>
<organism>
    <name type="scientific">Shigella boydii serotype 18 (strain CDC 3083-94 / BS512)</name>
    <dbReference type="NCBI Taxonomy" id="344609"/>
    <lineage>
        <taxon>Bacteria</taxon>
        <taxon>Pseudomonadati</taxon>
        <taxon>Pseudomonadota</taxon>
        <taxon>Gammaproteobacteria</taxon>
        <taxon>Enterobacterales</taxon>
        <taxon>Enterobacteriaceae</taxon>
        <taxon>Shigella</taxon>
    </lineage>
</organism>
<protein>
    <recommendedName>
        <fullName evidence="1">3-hydroxydecanoyl-[acyl-carrier-protein] dehydratase</fullName>
        <ecNumber evidence="1">4.2.1.59</ecNumber>
    </recommendedName>
    <alternativeName>
        <fullName evidence="1">3-hydroxyacyl-[acyl-carrier-protein] dehydratase FabA</fullName>
    </alternativeName>
    <alternativeName>
        <fullName evidence="1">Beta-hydroxydecanoyl thioester dehydrase</fullName>
    </alternativeName>
    <alternativeName>
        <fullName evidence="1">Trans-2-decenoyl-[acyl-carrier-protein] isomerase</fullName>
        <ecNumber evidence="1">5.3.3.14</ecNumber>
    </alternativeName>
</protein>
<keyword id="KW-0963">Cytoplasm</keyword>
<keyword id="KW-0275">Fatty acid biosynthesis</keyword>
<keyword id="KW-0276">Fatty acid metabolism</keyword>
<keyword id="KW-0413">Isomerase</keyword>
<keyword id="KW-0444">Lipid biosynthesis</keyword>
<keyword id="KW-0443">Lipid metabolism</keyword>
<keyword id="KW-0456">Lyase</keyword>
<keyword id="KW-1185">Reference proteome</keyword>